<reference key="1">
    <citation type="journal article" date="2006" name="Nature">
        <title>The finished DNA sequence of human chromosome 12.</title>
        <authorList>
            <person name="Scherer S.E."/>
            <person name="Muzny D.M."/>
            <person name="Buhay C.J."/>
            <person name="Chen R."/>
            <person name="Cree A."/>
            <person name="Ding Y."/>
            <person name="Dugan-Rocha S."/>
            <person name="Gill R."/>
            <person name="Gunaratne P."/>
            <person name="Harris R.A."/>
            <person name="Hawes A.C."/>
            <person name="Hernandez J."/>
            <person name="Hodgson A.V."/>
            <person name="Hume J."/>
            <person name="Jackson A."/>
            <person name="Khan Z.M."/>
            <person name="Kovar-Smith C."/>
            <person name="Lewis L.R."/>
            <person name="Lozado R.J."/>
            <person name="Metzker M.L."/>
            <person name="Milosavljevic A."/>
            <person name="Miner G.R."/>
            <person name="Montgomery K.T."/>
            <person name="Morgan M.B."/>
            <person name="Nazareth L.V."/>
            <person name="Scott G."/>
            <person name="Sodergren E."/>
            <person name="Song X.-Z."/>
            <person name="Steffen D."/>
            <person name="Lovering R.C."/>
            <person name="Wheeler D.A."/>
            <person name="Worley K.C."/>
            <person name="Yuan Y."/>
            <person name="Zhang Z."/>
            <person name="Adams C.Q."/>
            <person name="Ansari-Lari M.A."/>
            <person name="Ayele M."/>
            <person name="Brown M.J."/>
            <person name="Chen G."/>
            <person name="Chen Z."/>
            <person name="Clerc-Blankenburg K.P."/>
            <person name="Davis C."/>
            <person name="Delgado O."/>
            <person name="Dinh H.H."/>
            <person name="Draper H."/>
            <person name="Gonzalez-Garay M.L."/>
            <person name="Havlak P."/>
            <person name="Jackson L.R."/>
            <person name="Jacob L.S."/>
            <person name="Kelly S.H."/>
            <person name="Li L."/>
            <person name="Li Z."/>
            <person name="Liu J."/>
            <person name="Liu W."/>
            <person name="Lu J."/>
            <person name="Maheshwari M."/>
            <person name="Nguyen B.-V."/>
            <person name="Okwuonu G.O."/>
            <person name="Pasternak S."/>
            <person name="Perez L.M."/>
            <person name="Plopper F.J.H."/>
            <person name="Santibanez J."/>
            <person name="Shen H."/>
            <person name="Tabor P.E."/>
            <person name="Verduzco D."/>
            <person name="Waldron L."/>
            <person name="Wang Q."/>
            <person name="Williams G.A."/>
            <person name="Zhang J."/>
            <person name="Zhou J."/>
            <person name="Allen C.C."/>
            <person name="Amin A.G."/>
            <person name="Anyalebechi V."/>
            <person name="Bailey M."/>
            <person name="Barbaria J.A."/>
            <person name="Bimage K.E."/>
            <person name="Bryant N.P."/>
            <person name="Burch P.E."/>
            <person name="Burkett C.E."/>
            <person name="Burrell K.L."/>
            <person name="Calderon E."/>
            <person name="Cardenas V."/>
            <person name="Carter K."/>
            <person name="Casias K."/>
            <person name="Cavazos I."/>
            <person name="Cavazos S.R."/>
            <person name="Ceasar H."/>
            <person name="Chacko J."/>
            <person name="Chan S.N."/>
            <person name="Chavez D."/>
            <person name="Christopoulos C."/>
            <person name="Chu J."/>
            <person name="Cockrell R."/>
            <person name="Cox C.D."/>
            <person name="Dang M."/>
            <person name="Dathorne S.R."/>
            <person name="David R."/>
            <person name="Davis C.M."/>
            <person name="Davy-Carroll L."/>
            <person name="Deshazo D.R."/>
            <person name="Donlin J.E."/>
            <person name="D'Souza L."/>
            <person name="Eaves K.A."/>
            <person name="Egan A."/>
            <person name="Emery-Cohen A.J."/>
            <person name="Escotto M."/>
            <person name="Flagg N."/>
            <person name="Forbes L.D."/>
            <person name="Gabisi A.M."/>
            <person name="Garza M."/>
            <person name="Hamilton C."/>
            <person name="Henderson N."/>
            <person name="Hernandez O."/>
            <person name="Hines S."/>
            <person name="Hogues M.E."/>
            <person name="Huang M."/>
            <person name="Idlebird D.G."/>
            <person name="Johnson R."/>
            <person name="Jolivet A."/>
            <person name="Jones S."/>
            <person name="Kagan R."/>
            <person name="King L.M."/>
            <person name="Leal B."/>
            <person name="Lebow H."/>
            <person name="Lee S."/>
            <person name="LeVan J.M."/>
            <person name="Lewis L.C."/>
            <person name="London P."/>
            <person name="Lorensuhewa L.M."/>
            <person name="Loulseged H."/>
            <person name="Lovett D.A."/>
            <person name="Lucier A."/>
            <person name="Lucier R.L."/>
            <person name="Ma J."/>
            <person name="Madu R.C."/>
            <person name="Mapua P."/>
            <person name="Martindale A.D."/>
            <person name="Martinez E."/>
            <person name="Massey E."/>
            <person name="Mawhiney S."/>
            <person name="Meador M.G."/>
            <person name="Mendez S."/>
            <person name="Mercado C."/>
            <person name="Mercado I.C."/>
            <person name="Merritt C.E."/>
            <person name="Miner Z.L."/>
            <person name="Minja E."/>
            <person name="Mitchell T."/>
            <person name="Mohabbat F."/>
            <person name="Mohabbat K."/>
            <person name="Montgomery B."/>
            <person name="Moore N."/>
            <person name="Morris S."/>
            <person name="Munidasa M."/>
            <person name="Ngo R.N."/>
            <person name="Nguyen N.B."/>
            <person name="Nickerson E."/>
            <person name="Nwaokelemeh O.O."/>
            <person name="Nwokenkwo S."/>
            <person name="Obregon M."/>
            <person name="Oguh M."/>
            <person name="Oragunye N."/>
            <person name="Oviedo R.J."/>
            <person name="Parish B.J."/>
            <person name="Parker D.N."/>
            <person name="Parrish J."/>
            <person name="Parks K.L."/>
            <person name="Paul H.A."/>
            <person name="Payton B.A."/>
            <person name="Perez A."/>
            <person name="Perrin W."/>
            <person name="Pickens A."/>
            <person name="Primus E.L."/>
            <person name="Pu L.-L."/>
            <person name="Puazo M."/>
            <person name="Quiles M.M."/>
            <person name="Quiroz J.B."/>
            <person name="Rabata D."/>
            <person name="Reeves K."/>
            <person name="Ruiz S.J."/>
            <person name="Shao H."/>
            <person name="Sisson I."/>
            <person name="Sonaike T."/>
            <person name="Sorelle R.P."/>
            <person name="Sutton A.E."/>
            <person name="Svatek A.F."/>
            <person name="Svetz L.A."/>
            <person name="Tamerisa K.S."/>
            <person name="Taylor T.R."/>
            <person name="Teague B."/>
            <person name="Thomas N."/>
            <person name="Thorn R.D."/>
            <person name="Trejos Z.Y."/>
            <person name="Trevino B.K."/>
            <person name="Ukegbu O.N."/>
            <person name="Urban J.B."/>
            <person name="Vasquez L.I."/>
            <person name="Vera V.A."/>
            <person name="Villasana D.M."/>
            <person name="Wang L."/>
            <person name="Ward-Moore S."/>
            <person name="Warren J.T."/>
            <person name="Wei X."/>
            <person name="White F."/>
            <person name="Williamson A.L."/>
            <person name="Wleczyk R."/>
            <person name="Wooden H.S."/>
            <person name="Wooden S.H."/>
            <person name="Yen J."/>
            <person name="Yoon L."/>
            <person name="Yoon V."/>
            <person name="Zorrilla S.E."/>
            <person name="Nelson D."/>
            <person name="Kucherlapati R."/>
            <person name="Weinstock G."/>
            <person name="Gibbs R.A."/>
        </authorList>
    </citation>
    <scope>NUCLEOTIDE SEQUENCE [LARGE SCALE GENOMIC DNA]</scope>
</reference>
<reference key="2">
    <citation type="journal article" date="2004" name="Brain Res. Dev. Brain Res.">
        <title>Expression of the winged helix/forkhead gene, foxn4, during zebrafish development.</title>
        <authorList>
            <person name="Danilova N."/>
            <person name="Visel A."/>
            <person name="Willett C.E."/>
            <person name="Steiner L.A."/>
        </authorList>
    </citation>
    <scope>NUCLEOTIDE SEQUENCE [MRNA] OF 41-517 (ISOFORMS 1 AND 2)</scope>
</reference>
<reference key="3">
    <citation type="journal article" date="2004" name="Nat. Genet.">
        <title>Complete sequencing and characterization of 21,243 full-length human cDNAs.</title>
        <authorList>
            <person name="Ota T."/>
            <person name="Suzuki Y."/>
            <person name="Nishikawa T."/>
            <person name="Otsuki T."/>
            <person name="Sugiyama T."/>
            <person name="Irie R."/>
            <person name="Wakamatsu A."/>
            <person name="Hayashi K."/>
            <person name="Sato H."/>
            <person name="Nagai K."/>
            <person name="Kimura K."/>
            <person name="Makita H."/>
            <person name="Sekine M."/>
            <person name="Obayashi M."/>
            <person name="Nishi T."/>
            <person name="Shibahara T."/>
            <person name="Tanaka T."/>
            <person name="Ishii S."/>
            <person name="Yamamoto J."/>
            <person name="Saito K."/>
            <person name="Kawai Y."/>
            <person name="Isono Y."/>
            <person name="Nakamura Y."/>
            <person name="Nagahari K."/>
            <person name="Murakami K."/>
            <person name="Yasuda T."/>
            <person name="Iwayanagi T."/>
            <person name="Wagatsuma M."/>
            <person name="Shiratori A."/>
            <person name="Sudo H."/>
            <person name="Hosoiri T."/>
            <person name="Kaku Y."/>
            <person name="Kodaira H."/>
            <person name="Kondo H."/>
            <person name="Sugawara M."/>
            <person name="Takahashi M."/>
            <person name="Kanda K."/>
            <person name="Yokoi T."/>
            <person name="Furuya T."/>
            <person name="Kikkawa E."/>
            <person name="Omura Y."/>
            <person name="Abe K."/>
            <person name="Kamihara K."/>
            <person name="Katsuta N."/>
            <person name="Sato K."/>
            <person name="Tanikawa M."/>
            <person name="Yamazaki M."/>
            <person name="Ninomiya K."/>
            <person name="Ishibashi T."/>
            <person name="Yamashita H."/>
            <person name="Murakawa K."/>
            <person name="Fujimori K."/>
            <person name="Tanai H."/>
            <person name="Kimata M."/>
            <person name="Watanabe M."/>
            <person name="Hiraoka S."/>
            <person name="Chiba Y."/>
            <person name="Ishida S."/>
            <person name="Ono Y."/>
            <person name="Takiguchi S."/>
            <person name="Watanabe S."/>
            <person name="Yosida M."/>
            <person name="Hotuta T."/>
            <person name="Kusano J."/>
            <person name="Kanehori K."/>
            <person name="Takahashi-Fujii A."/>
            <person name="Hara H."/>
            <person name="Tanase T.-O."/>
            <person name="Nomura Y."/>
            <person name="Togiya S."/>
            <person name="Komai F."/>
            <person name="Hara R."/>
            <person name="Takeuchi K."/>
            <person name="Arita M."/>
            <person name="Imose N."/>
            <person name="Musashino K."/>
            <person name="Yuuki H."/>
            <person name="Oshima A."/>
            <person name="Sasaki N."/>
            <person name="Aotsuka S."/>
            <person name="Yoshikawa Y."/>
            <person name="Matsunawa H."/>
            <person name="Ichihara T."/>
            <person name="Shiohata N."/>
            <person name="Sano S."/>
            <person name="Moriya S."/>
            <person name="Momiyama H."/>
            <person name="Satoh N."/>
            <person name="Takami S."/>
            <person name="Terashima Y."/>
            <person name="Suzuki O."/>
            <person name="Nakagawa S."/>
            <person name="Senoh A."/>
            <person name="Mizoguchi H."/>
            <person name="Goto Y."/>
            <person name="Shimizu F."/>
            <person name="Wakebe H."/>
            <person name="Hishigaki H."/>
            <person name="Watanabe T."/>
            <person name="Sugiyama A."/>
            <person name="Takemoto M."/>
            <person name="Kawakami B."/>
            <person name="Yamazaki M."/>
            <person name="Watanabe K."/>
            <person name="Kumagai A."/>
            <person name="Itakura S."/>
            <person name="Fukuzumi Y."/>
            <person name="Fujimori Y."/>
            <person name="Komiyama M."/>
            <person name="Tashiro H."/>
            <person name="Tanigami A."/>
            <person name="Fujiwara T."/>
            <person name="Ono T."/>
            <person name="Yamada K."/>
            <person name="Fujii Y."/>
            <person name="Ozaki K."/>
            <person name="Hirao M."/>
            <person name="Ohmori Y."/>
            <person name="Kawabata A."/>
            <person name="Hikiji T."/>
            <person name="Kobatake N."/>
            <person name="Inagaki H."/>
            <person name="Ikema Y."/>
            <person name="Okamoto S."/>
            <person name="Okitani R."/>
            <person name="Kawakami T."/>
            <person name="Noguchi S."/>
            <person name="Itoh T."/>
            <person name="Shigeta K."/>
            <person name="Senba T."/>
            <person name="Matsumura K."/>
            <person name="Nakajima Y."/>
            <person name="Mizuno T."/>
            <person name="Morinaga M."/>
            <person name="Sasaki M."/>
            <person name="Togashi T."/>
            <person name="Oyama M."/>
            <person name="Hata H."/>
            <person name="Watanabe M."/>
            <person name="Komatsu T."/>
            <person name="Mizushima-Sugano J."/>
            <person name="Satoh T."/>
            <person name="Shirai Y."/>
            <person name="Takahashi Y."/>
            <person name="Nakagawa K."/>
            <person name="Okumura K."/>
            <person name="Nagase T."/>
            <person name="Nomura N."/>
            <person name="Kikuchi H."/>
            <person name="Masuho Y."/>
            <person name="Yamashita R."/>
            <person name="Nakai K."/>
            <person name="Yada T."/>
            <person name="Nakamura Y."/>
            <person name="Ohara O."/>
            <person name="Isogai T."/>
            <person name="Sugano S."/>
        </authorList>
    </citation>
    <scope>NUCLEOTIDE SEQUENCE [LARGE SCALE MRNA] (ISOFORM 3)</scope>
    <source>
        <tissue>Brain</tissue>
    </source>
</reference>
<dbReference type="EMBL" id="AC012384">
    <property type="status" value="NOT_ANNOTATED_CDS"/>
    <property type="molecule type" value="Genomic_DNA"/>
</dbReference>
<dbReference type="EMBL" id="AF425596">
    <property type="protein sequence ID" value="AAL23949.1"/>
    <property type="molecule type" value="mRNA"/>
</dbReference>
<dbReference type="EMBL" id="AF425597">
    <property type="protein sequence ID" value="AAL23950.1"/>
    <property type="molecule type" value="mRNA"/>
</dbReference>
<dbReference type="EMBL" id="AK131519">
    <property type="protein sequence ID" value="BAD18661.1"/>
    <property type="molecule type" value="mRNA"/>
</dbReference>
<dbReference type="CCDS" id="CCDS9126.2">
    <molecule id="Q96NZ1-1"/>
</dbReference>
<dbReference type="RefSeq" id="NP_998761.2">
    <molecule id="Q96NZ1-1"/>
    <property type="nucleotide sequence ID" value="NM_213596.3"/>
</dbReference>
<dbReference type="SMR" id="Q96NZ1"/>
<dbReference type="BioGRID" id="125742">
    <property type="interactions" value="30"/>
</dbReference>
<dbReference type="FunCoup" id="Q96NZ1">
    <property type="interactions" value="986"/>
</dbReference>
<dbReference type="IntAct" id="Q96NZ1">
    <property type="interactions" value="6"/>
</dbReference>
<dbReference type="STRING" id="9606.ENSP00000299162"/>
<dbReference type="GlyGen" id="Q96NZ1">
    <property type="glycosylation" value="1 site"/>
</dbReference>
<dbReference type="iPTMnet" id="Q96NZ1"/>
<dbReference type="PhosphoSitePlus" id="Q96NZ1"/>
<dbReference type="BioMuta" id="FOXN4"/>
<dbReference type="DMDM" id="71153520"/>
<dbReference type="jPOST" id="Q96NZ1"/>
<dbReference type="MassIVE" id="Q96NZ1"/>
<dbReference type="PaxDb" id="9606-ENSP00000299162"/>
<dbReference type="PeptideAtlas" id="Q96NZ1"/>
<dbReference type="ProteomicsDB" id="77580">
    <molecule id="Q96NZ1-1"/>
</dbReference>
<dbReference type="Antibodypedia" id="30846">
    <property type="antibodies" value="190 antibodies from 24 providers"/>
</dbReference>
<dbReference type="DNASU" id="121643"/>
<dbReference type="Ensembl" id="ENST00000299162.10">
    <molecule id="Q96NZ1-1"/>
    <property type="protein sequence ID" value="ENSP00000299162.5"/>
    <property type="gene ID" value="ENSG00000139445.18"/>
</dbReference>
<dbReference type="Ensembl" id="ENST00000355216.5">
    <molecule id="Q96NZ1-3"/>
    <property type="protein sequence ID" value="ENSP00000347354.1"/>
    <property type="gene ID" value="ENSG00000139445.18"/>
</dbReference>
<dbReference type="GeneID" id="121643"/>
<dbReference type="KEGG" id="hsa:121643"/>
<dbReference type="MANE-Select" id="ENST00000299162.10">
    <property type="protein sequence ID" value="ENSP00000299162.5"/>
    <property type="RefSeq nucleotide sequence ID" value="NM_213596.3"/>
    <property type="RefSeq protein sequence ID" value="NP_998761.2"/>
</dbReference>
<dbReference type="UCSC" id="uc001toe.5">
    <molecule id="Q96NZ1-1"/>
    <property type="organism name" value="human"/>
</dbReference>
<dbReference type="AGR" id="HGNC:21399"/>
<dbReference type="CTD" id="121643"/>
<dbReference type="DisGeNET" id="121643"/>
<dbReference type="GeneCards" id="FOXN4"/>
<dbReference type="HGNC" id="HGNC:21399">
    <property type="gene designation" value="FOXN4"/>
</dbReference>
<dbReference type="HPA" id="ENSG00000139445">
    <property type="expression patterns" value="Tissue enriched (testis)"/>
</dbReference>
<dbReference type="MIM" id="609429">
    <property type="type" value="gene"/>
</dbReference>
<dbReference type="neXtProt" id="NX_Q96NZ1"/>
<dbReference type="OpenTargets" id="ENSG00000139445"/>
<dbReference type="PharmGKB" id="PA134982965"/>
<dbReference type="VEuPathDB" id="HostDB:ENSG00000139445"/>
<dbReference type="eggNOG" id="KOG2294">
    <property type="taxonomic scope" value="Eukaryota"/>
</dbReference>
<dbReference type="GeneTree" id="ENSGT00940000158984"/>
<dbReference type="HOGENOM" id="CLU_031768_0_0_1"/>
<dbReference type="InParanoid" id="Q96NZ1"/>
<dbReference type="OMA" id="QCPTSVY"/>
<dbReference type="OrthoDB" id="10070006at2759"/>
<dbReference type="PAN-GO" id="Q96NZ1">
    <property type="GO annotations" value="4 GO annotations based on evolutionary models"/>
</dbReference>
<dbReference type="PhylomeDB" id="Q96NZ1"/>
<dbReference type="TreeFam" id="TF329867"/>
<dbReference type="PathwayCommons" id="Q96NZ1"/>
<dbReference type="SignaLink" id="Q96NZ1"/>
<dbReference type="SIGNOR" id="Q96NZ1"/>
<dbReference type="BioGRID-ORCS" id="121643">
    <property type="hits" value="18 hits in 1169 CRISPR screens"/>
</dbReference>
<dbReference type="ChiTaRS" id="FOXN4">
    <property type="organism name" value="human"/>
</dbReference>
<dbReference type="GenomeRNAi" id="121643"/>
<dbReference type="Pharos" id="Q96NZ1">
    <property type="development level" value="Tbio"/>
</dbReference>
<dbReference type="PRO" id="PR:Q96NZ1"/>
<dbReference type="Proteomes" id="UP000005640">
    <property type="component" value="Chromosome 12"/>
</dbReference>
<dbReference type="RNAct" id="Q96NZ1">
    <property type="molecule type" value="protein"/>
</dbReference>
<dbReference type="Bgee" id="ENSG00000139445">
    <property type="expression patterns" value="Expressed in ventricular zone and 90 other cell types or tissues"/>
</dbReference>
<dbReference type="ExpressionAtlas" id="Q96NZ1">
    <property type="expression patterns" value="baseline and differential"/>
</dbReference>
<dbReference type="GO" id="GO:0000785">
    <property type="term" value="C:chromatin"/>
    <property type="evidence" value="ECO:0000247"/>
    <property type="project" value="NTNU_SB"/>
</dbReference>
<dbReference type="GO" id="GO:0005634">
    <property type="term" value="C:nucleus"/>
    <property type="evidence" value="ECO:0000250"/>
    <property type="project" value="UniProtKB"/>
</dbReference>
<dbReference type="GO" id="GO:0003682">
    <property type="term" value="F:chromatin binding"/>
    <property type="evidence" value="ECO:0000250"/>
    <property type="project" value="UniProtKB"/>
</dbReference>
<dbReference type="GO" id="GO:0000987">
    <property type="term" value="F:cis-regulatory region sequence-specific DNA binding"/>
    <property type="evidence" value="ECO:0000314"/>
    <property type="project" value="UniProtKB"/>
</dbReference>
<dbReference type="GO" id="GO:0003700">
    <property type="term" value="F:DNA-binding transcription factor activity"/>
    <property type="evidence" value="ECO:0000318"/>
    <property type="project" value="GO_Central"/>
</dbReference>
<dbReference type="GO" id="GO:0000981">
    <property type="term" value="F:DNA-binding transcription factor activity, RNA polymerase II-specific"/>
    <property type="evidence" value="ECO:0000250"/>
    <property type="project" value="UniProtKB"/>
</dbReference>
<dbReference type="GO" id="GO:0035881">
    <property type="term" value="P:amacrine cell differentiation"/>
    <property type="evidence" value="ECO:0000250"/>
    <property type="project" value="UniProtKB"/>
</dbReference>
<dbReference type="GO" id="GO:0036302">
    <property type="term" value="P:atrioventricular canal development"/>
    <property type="evidence" value="ECO:0000250"/>
    <property type="project" value="UniProtKB"/>
</dbReference>
<dbReference type="GO" id="GO:0001947">
    <property type="term" value="P:heart looping"/>
    <property type="evidence" value="ECO:0000250"/>
    <property type="project" value="UniProtKB"/>
</dbReference>
<dbReference type="GO" id="GO:0045944">
    <property type="term" value="P:positive regulation of transcription by RNA polymerase II"/>
    <property type="evidence" value="ECO:0000250"/>
    <property type="project" value="UniProtKB"/>
</dbReference>
<dbReference type="GO" id="GO:0006355">
    <property type="term" value="P:regulation of DNA-templated transcription"/>
    <property type="evidence" value="ECO:0000250"/>
    <property type="project" value="UniProtKB"/>
</dbReference>
<dbReference type="GO" id="GO:0008016">
    <property type="term" value="P:regulation of heart contraction"/>
    <property type="evidence" value="ECO:0000250"/>
    <property type="project" value="UniProtKB"/>
</dbReference>
<dbReference type="GO" id="GO:0010842">
    <property type="term" value="P:retina layer formation"/>
    <property type="evidence" value="ECO:0000250"/>
    <property type="project" value="UniProtKB"/>
</dbReference>
<dbReference type="GO" id="GO:0021514">
    <property type="term" value="P:ventral spinal cord interneuron differentiation"/>
    <property type="evidence" value="ECO:0000250"/>
    <property type="project" value="UniProtKB"/>
</dbReference>
<dbReference type="GO" id="GO:0060579">
    <property type="term" value="P:ventral spinal cord interneuron fate commitment"/>
    <property type="evidence" value="ECO:0000250"/>
    <property type="project" value="UniProtKB"/>
</dbReference>
<dbReference type="CDD" id="cd20057">
    <property type="entry name" value="FH_FOXN4"/>
    <property type="match status" value="1"/>
</dbReference>
<dbReference type="FunFam" id="1.10.10.10:FF:000122">
    <property type="entry name" value="Forkhead box protein N1"/>
    <property type="match status" value="1"/>
</dbReference>
<dbReference type="Gene3D" id="1.10.10.10">
    <property type="entry name" value="Winged helix-like DNA-binding domain superfamily/Winged helix DNA-binding domain"/>
    <property type="match status" value="1"/>
</dbReference>
<dbReference type="InterPro" id="IPR001766">
    <property type="entry name" value="Fork_head_dom"/>
</dbReference>
<dbReference type="InterPro" id="IPR047119">
    <property type="entry name" value="FOXN2/3-like"/>
</dbReference>
<dbReference type="InterPro" id="IPR030456">
    <property type="entry name" value="TF_fork_head_CS_2"/>
</dbReference>
<dbReference type="InterPro" id="IPR036388">
    <property type="entry name" value="WH-like_DNA-bd_sf"/>
</dbReference>
<dbReference type="InterPro" id="IPR036390">
    <property type="entry name" value="WH_DNA-bd_sf"/>
</dbReference>
<dbReference type="PANTHER" id="PTHR13962">
    <property type="entry name" value="FORKHEAD BOX PROTEIN N3-LIKE PROTEIN-RELATED"/>
    <property type="match status" value="1"/>
</dbReference>
<dbReference type="PANTHER" id="PTHR13962:SF17">
    <property type="entry name" value="FORKHEAD BOX PROTEIN N4"/>
    <property type="match status" value="1"/>
</dbReference>
<dbReference type="Pfam" id="PF00250">
    <property type="entry name" value="Forkhead"/>
    <property type="match status" value="1"/>
</dbReference>
<dbReference type="PRINTS" id="PR00053">
    <property type="entry name" value="FORKHEAD"/>
</dbReference>
<dbReference type="SMART" id="SM00339">
    <property type="entry name" value="FH"/>
    <property type="match status" value="1"/>
</dbReference>
<dbReference type="SUPFAM" id="SSF46785">
    <property type="entry name" value="Winged helix' DNA-binding domain"/>
    <property type="match status" value="1"/>
</dbReference>
<dbReference type="PROSITE" id="PS00658">
    <property type="entry name" value="FORK_HEAD_2"/>
    <property type="match status" value="1"/>
</dbReference>
<dbReference type="PROSITE" id="PS50039">
    <property type="entry name" value="FORK_HEAD_3"/>
    <property type="match status" value="1"/>
</dbReference>
<name>FOXN4_HUMAN</name>
<keyword id="KW-0025">Alternative splicing</keyword>
<keyword id="KW-0217">Developmental protein</keyword>
<keyword id="KW-0238">DNA-binding</keyword>
<keyword id="KW-0524">Neurogenesis</keyword>
<keyword id="KW-0539">Nucleus</keyword>
<keyword id="KW-1267">Proteomics identification</keyword>
<keyword id="KW-1185">Reference proteome</keyword>
<keyword id="KW-0804">Transcription</keyword>
<keyword id="KW-0805">Transcription regulation</keyword>
<organism>
    <name type="scientific">Homo sapiens</name>
    <name type="common">Human</name>
    <dbReference type="NCBI Taxonomy" id="9606"/>
    <lineage>
        <taxon>Eukaryota</taxon>
        <taxon>Metazoa</taxon>
        <taxon>Chordata</taxon>
        <taxon>Craniata</taxon>
        <taxon>Vertebrata</taxon>
        <taxon>Euteleostomi</taxon>
        <taxon>Mammalia</taxon>
        <taxon>Eutheria</taxon>
        <taxon>Euarchontoglires</taxon>
        <taxon>Primates</taxon>
        <taxon>Haplorrhini</taxon>
        <taxon>Catarrhini</taxon>
        <taxon>Hominidae</taxon>
        <taxon>Homo</taxon>
    </lineage>
</organism>
<gene>
    <name type="primary">FOXN4</name>
</gene>
<evidence type="ECO:0000250" key="1"/>
<evidence type="ECO:0000255" key="2">
    <source>
        <dbReference type="PROSITE-ProRule" id="PRU00089"/>
    </source>
</evidence>
<evidence type="ECO:0000256" key="3">
    <source>
        <dbReference type="SAM" id="MobiDB-lite"/>
    </source>
</evidence>
<evidence type="ECO:0000303" key="4">
    <source>
    </source>
</evidence>
<evidence type="ECO:0000303" key="5">
    <source>
    </source>
</evidence>
<feature type="chain" id="PRO_0000091870" description="Forkhead box protein N4">
    <location>
        <begin position="1"/>
        <end position="517"/>
    </location>
</feature>
<feature type="DNA-binding region" description="Fork-head" evidence="2">
    <location>
        <begin position="193"/>
        <end position="289"/>
    </location>
</feature>
<feature type="region of interest" description="Disordered" evidence="3">
    <location>
        <begin position="365"/>
        <end position="398"/>
    </location>
</feature>
<feature type="region of interest" description="Disordered" evidence="3">
    <location>
        <begin position="497"/>
        <end position="517"/>
    </location>
</feature>
<feature type="splice variant" id="VSP_054325" description="In isoform 3." evidence="4">
    <original>MIESDTSSIMSGIIRNSGQNHHPSPQEYRLLATTSDDDLPGDLQSLSWLTAVDVPRLQQMASGRVDLGGPCVPHPHPGALAGVADLHVGATPSPLLHGPAGMAPRGMPGLGPITGHRDSMSQFPVGGQPSSGLQDPPHLYSPATQPQFPLPPGAQQCPPVGLYGPPFGVRPPYPQPHVAVHSSQELHPKHYPKPIYSY</original>
    <variation>MPGLPCPALPCPAPPPAP</variation>
    <location>
        <begin position="1"/>
        <end position="198"/>
    </location>
</feature>
<feature type="splice variant" id="VSP_017227" description="In isoform 2." evidence="5">
    <original>S</original>
    <variation>SQ</variation>
    <location>
        <position position="119"/>
    </location>
</feature>
<feature type="splice variant" id="VSP_017228" description="In isoform 2." evidence="5">
    <original>CPPVGLYGPPFGVRPPYPQPHVAVHSSQELHPKHYPKPIYSYSCLIAMALKNSKTGSLPVSEIYSFMKEHFPYFKTAPDGWKNSVRHNLSLNKCFEKVENK</original>
    <variation>LSDRHGPEEQQDRQPACERDLQLHEGALPLLQDGPRRVEELGAAQPVSEQVLREGGEQDERLLPQGLPVGSEPGPHRQDGGGDAQVEEEGPGCHPPEYGQP</variation>
    <location>
        <begin position="157"/>
        <end position="257"/>
    </location>
</feature>
<feature type="splice variant" id="VSP_017229" description="In isoform 2." evidence="5">
    <location>
        <begin position="258"/>
        <end position="517"/>
    </location>
</feature>
<feature type="sequence variant" id="VAR_059300" description="In dbSNP:rs11609341.">
    <original>P</original>
    <variation>L</variation>
    <location>
        <position position="137"/>
    </location>
</feature>
<protein>
    <recommendedName>
        <fullName>Forkhead box protein N4</fullName>
    </recommendedName>
</protein>
<comment type="function">
    <text evidence="1">Transcription factor essential for neural and some non-neural tissues development, such as retina and lung respectively. Binds to an 11-bp consensus sequence containing the invariant tetranucleotide 5'-ACGC-3'. During development of the central nervous system, is required to specify the amacrine and horizontal cell fates from multipotent retinal progenitors while suppressing the alternative photoreceptor cell fates through activating DLL4-NOTCH signaling. Also acts synergistically with ASCL1/MASH1 to activate DLL4-NOTCH signaling and drive commitment of p2 progenitors to the V2b interneuron fates during spinal cord neurogenesis. In development of non-neural tissues, plays an essential role in the specification of the atrioventricular canal and is indirectly required for patterning the distal airway during lung development (By similarity).</text>
</comment>
<comment type="interaction">
    <interactant intactId="EBI-11749712">
        <id>Q96NZ1</id>
    </interactant>
    <interactant intactId="EBI-738586">
        <id>P04745</id>
        <label>AMY1C</label>
    </interactant>
    <organismsDiffer>false</organismsDiffer>
    <experiments>2</experiments>
</comment>
<comment type="interaction">
    <interactant intactId="EBI-11749712">
        <id>Q96NZ1</id>
    </interactant>
    <interactant intactId="EBI-930964">
        <id>P54253</id>
        <label>ATXN1</label>
    </interactant>
    <organismsDiffer>false</organismsDiffer>
    <experiments>3</experiments>
</comment>
<comment type="interaction">
    <interactant intactId="EBI-11749712">
        <id>Q96NZ1</id>
    </interactant>
    <interactant intactId="EBI-741101">
        <id>Q13643</id>
        <label>FHL3</label>
    </interactant>
    <organismsDiffer>false</organismsDiffer>
    <experiments>4</experiments>
</comment>
<comment type="interaction">
    <interactant intactId="EBI-11749712">
        <id>Q96NZ1</id>
    </interactant>
    <interactant intactId="EBI-746731">
        <id>P48378</id>
        <label>RFX2</label>
    </interactant>
    <organismsDiffer>false</organismsDiffer>
    <experiments>3</experiments>
</comment>
<comment type="subcellular location">
    <subcellularLocation>
        <location evidence="2">Nucleus</location>
    </subcellularLocation>
</comment>
<comment type="alternative products">
    <event type="alternative splicing"/>
    <isoform>
        <id>Q96NZ1-1</id>
        <name>1</name>
        <sequence type="displayed"/>
    </isoform>
    <isoform>
        <id>Q96NZ1-2</id>
        <name>2</name>
        <sequence type="described" ref="VSP_017227 VSP_017228 VSP_017229"/>
    </isoform>
    <isoform>
        <id>Q96NZ1-3</id>
        <name>3</name>
        <sequence type="described" ref="VSP_054325"/>
    </isoform>
</comment>
<accession>Q96NZ1</accession>
<accession>Q6ZMR4</accession>
<accession>Q96NZ0</accession>
<proteinExistence type="evidence at protein level"/>
<sequence length="517" mass="55215">MIESDTSSIMSGIIRNSGQNHHPSPQEYRLLATTSDDDLPGDLQSLSWLTAVDVPRLQQMASGRVDLGGPCVPHPHPGALAGVADLHVGATPSPLLHGPAGMAPRGMPGLGPITGHRDSMSQFPVGGQPSSGLQDPPHLYSPATQPQFPLPPGAQQCPPVGLYGPPFGVRPPYPQPHVAVHSSQELHPKHYPKPIYSYSCLIAMALKNSKTGSLPVSEIYSFMKEHFPYFKTAPDGWKNSVRHNLSLNKCFEKVENKMSGSSRKGCLWALNLARIDKMEEEMHKWKRKDLAAIHRSMANPEELDKLISDRPESCRRPGKPGEPEAPVLTHATTVAVAHGCLAVSQLPPQPLMTLSLQSVPLHHQVQPQAHLAPDSPAPAQTPPLHALPDLSPSPLPHPAMGRAPVDFINISTDMNTEVDALDPSIMDFALQGNLWEEMKDEGFSLDTLGAFADSPLGCDLGASGLTPASGGSDQSFPDLQVTGLYTAYSTPDSVAASGTSSSSQYLGAQGNKPIALL</sequence>